<dbReference type="EC" id="2.7.1.39" evidence="1"/>
<dbReference type="EMBL" id="CP001113">
    <property type="protein sequence ID" value="ACF63577.1"/>
    <property type="molecule type" value="Genomic_DNA"/>
</dbReference>
<dbReference type="RefSeq" id="WP_000241685.1">
    <property type="nucleotide sequence ID" value="NZ_CCMR01000003.1"/>
</dbReference>
<dbReference type="SMR" id="B4T6C6"/>
<dbReference type="KEGG" id="see:SNSL254_A0003"/>
<dbReference type="HOGENOM" id="CLU_041243_1_1_6"/>
<dbReference type="UniPathway" id="UPA00050">
    <property type="reaction ID" value="UER00064"/>
</dbReference>
<dbReference type="Proteomes" id="UP000008824">
    <property type="component" value="Chromosome"/>
</dbReference>
<dbReference type="GO" id="GO:0005737">
    <property type="term" value="C:cytoplasm"/>
    <property type="evidence" value="ECO:0007669"/>
    <property type="project" value="UniProtKB-SubCell"/>
</dbReference>
<dbReference type="GO" id="GO:0005524">
    <property type="term" value="F:ATP binding"/>
    <property type="evidence" value="ECO:0007669"/>
    <property type="project" value="UniProtKB-UniRule"/>
</dbReference>
<dbReference type="GO" id="GO:0004413">
    <property type="term" value="F:homoserine kinase activity"/>
    <property type="evidence" value="ECO:0007669"/>
    <property type="project" value="UniProtKB-UniRule"/>
</dbReference>
<dbReference type="GO" id="GO:0009088">
    <property type="term" value="P:threonine biosynthetic process"/>
    <property type="evidence" value="ECO:0007669"/>
    <property type="project" value="UniProtKB-UniRule"/>
</dbReference>
<dbReference type="FunFam" id="3.30.230.10:FF:000020">
    <property type="entry name" value="Homoserine kinase"/>
    <property type="match status" value="1"/>
</dbReference>
<dbReference type="FunFam" id="3.30.70.890:FF:000002">
    <property type="entry name" value="Homoserine kinase"/>
    <property type="match status" value="1"/>
</dbReference>
<dbReference type="Gene3D" id="3.30.230.10">
    <property type="match status" value="1"/>
</dbReference>
<dbReference type="Gene3D" id="3.30.70.890">
    <property type="entry name" value="GHMP kinase, C-terminal domain"/>
    <property type="match status" value="1"/>
</dbReference>
<dbReference type="HAMAP" id="MF_00384">
    <property type="entry name" value="Homoser_kinase"/>
    <property type="match status" value="1"/>
</dbReference>
<dbReference type="InterPro" id="IPR013750">
    <property type="entry name" value="GHMP_kinase_C_dom"/>
</dbReference>
<dbReference type="InterPro" id="IPR036554">
    <property type="entry name" value="GHMP_kinase_C_sf"/>
</dbReference>
<dbReference type="InterPro" id="IPR006204">
    <property type="entry name" value="GHMP_kinase_N_dom"/>
</dbReference>
<dbReference type="InterPro" id="IPR006203">
    <property type="entry name" value="GHMP_knse_ATP-bd_CS"/>
</dbReference>
<dbReference type="InterPro" id="IPR000870">
    <property type="entry name" value="Homoserine_kinase"/>
</dbReference>
<dbReference type="InterPro" id="IPR020568">
    <property type="entry name" value="Ribosomal_Su5_D2-typ_SF"/>
</dbReference>
<dbReference type="InterPro" id="IPR014721">
    <property type="entry name" value="Ribsml_uS5_D2-typ_fold_subgr"/>
</dbReference>
<dbReference type="NCBIfam" id="NF002288">
    <property type="entry name" value="PRK01212.1-4"/>
    <property type="match status" value="1"/>
</dbReference>
<dbReference type="NCBIfam" id="TIGR00191">
    <property type="entry name" value="thrB"/>
    <property type="match status" value="1"/>
</dbReference>
<dbReference type="PANTHER" id="PTHR20861:SF1">
    <property type="entry name" value="HOMOSERINE KINASE"/>
    <property type="match status" value="1"/>
</dbReference>
<dbReference type="PANTHER" id="PTHR20861">
    <property type="entry name" value="HOMOSERINE/4-DIPHOSPHOCYTIDYL-2-C-METHYL-D-ERYTHRITOL KINASE"/>
    <property type="match status" value="1"/>
</dbReference>
<dbReference type="Pfam" id="PF08544">
    <property type="entry name" value="GHMP_kinases_C"/>
    <property type="match status" value="1"/>
</dbReference>
<dbReference type="Pfam" id="PF00288">
    <property type="entry name" value="GHMP_kinases_N"/>
    <property type="match status" value="1"/>
</dbReference>
<dbReference type="PIRSF" id="PIRSF000676">
    <property type="entry name" value="Homoser_kin"/>
    <property type="match status" value="1"/>
</dbReference>
<dbReference type="PRINTS" id="PR00958">
    <property type="entry name" value="HOMSERKINASE"/>
</dbReference>
<dbReference type="SUPFAM" id="SSF55060">
    <property type="entry name" value="GHMP Kinase, C-terminal domain"/>
    <property type="match status" value="1"/>
</dbReference>
<dbReference type="SUPFAM" id="SSF54211">
    <property type="entry name" value="Ribosomal protein S5 domain 2-like"/>
    <property type="match status" value="1"/>
</dbReference>
<dbReference type="PROSITE" id="PS00627">
    <property type="entry name" value="GHMP_KINASES_ATP"/>
    <property type="match status" value="1"/>
</dbReference>
<gene>
    <name evidence="1" type="primary">thrB</name>
    <name type="ordered locus">SNSL254_A0003</name>
</gene>
<keyword id="KW-0028">Amino-acid biosynthesis</keyword>
<keyword id="KW-0067">ATP-binding</keyword>
<keyword id="KW-0963">Cytoplasm</keyword>
<keyword id="KW-0418">Kinase</keyword>
<keyword id="KW-0547">Nucleotide-binding</keyword>
<keyword id="KW-0791">Threonine biosynthesis</keyword>
<keyword id="KW-0808">Transferase</keyword>
<sequence length="309" mass="33286">MVKVYAPASSANMSVGFDVLGAAVTPVDGTLLGDVVSVEAADHFRLHNLGRFADKLPPEPRENIVYQCWERFCQALGKTIPVAMTLEKNMPIGSGLGSSACSVVAALVAMNEHCGKPLNDTRLLALMGELEGRISGSIHYDNVAPCFLGGMQLMIEENGIISQQVPGFDEWLWVLAYPGIKVSTAEARAILPAQYRRQDCIAHGRHLAGFIHACYSRQPQLAAALMKDVIAEPYRARLLPGFSQARQAVSEIGALASGISGSGPTLFALCDKPETAQRVADWLSKHYLQNQEGFVHICRLDTAGARVVG</sequence>
<proteinExistence type="inferred from homology"/>
<protein>
    <recommendedName>
        <fullName evidence="1">Homoserine kinase</fullName>
        <shortName evidence="1">HK</shortName>
        <shortName evidence="1">HSK</shortName>
        <ecNumber evidence="1">2.7.1.39</ecNumber>
    </recommendedName>
</protein>
<name>KHSE_SALNS</name>
<organism>
    <name type="scientific">Salmonella newport (strain SL254)</name>
    <dbReference type="NCBI Taxonomy" id="423368"/>
    <lineage>
        <taxon>Bacteria</taxon>
        <taxon>Pseudomonadati</taxon>
        <taxon>Pseudomonadota</taxon>
        <taxon>Gammaproteobacteria</taxon>
        <taxon>Enterobacterales</taxon>
        <taxon>Enterobacteriaceae</taxon>
        <taxon>Salmonella</taxon>
    </lineage>
</organism>
<comment type="function">
    <text evidence="1">Catalyzes the ATP-dependent phosphorylation of L-homoserine to L-homoserine phosphate.</text>
</comment>
<comment type="catalytic activity">
    <reaction evidence="1">
        <text>L-homoserine + ATP = O-phospho-L-homoserine + ADP + H(+)</text>
        <dbReference type="Rhea" id="RHEA:13985"/>
        <dbReference type="ChEBI" id="CHEBI:15378"/>
        <dbReference type="ChEBI" id="CHEBI:30616"/>
        <dbReference type="ChEBI" id="CHEBI:57476"/>
        <dbReference type="ChEBI" id="CHEBI:57590"/>
        <dbReference type="ChEBI" id="CHEBI:456216"/>
        <dbReference type="EC" id="2.7.1.39"/>
    </reaction>
</comment>
<comment type="pathway">
    <text evidence="1">Amino-acid biosynthesis; L-threonine biosynthesis; L-threonine from L-aspartate: step 4/5.</text>
</comment>
<comment type="subcellular location">
    <subcellularLocation>
        <location evidence="1">Cytoplasm</location>
    </subcellularLocation>
</comment>
<comment type="similarity">
    <text evidence="1">Belongs to the GHMP kinase family. Homoserine kinase subfamily.</text>
</comment>
<feature type="chain" id="PRO_1000122441" description="Homoserine kinase">
    <location>
        <begin position="1"/>
        <end position="309"/>
    </location>
</feature>
<feature type="binding site" evidence="1">
    <location>
        <begin position="91"/>
        <end position="101"/>
    </location>
    <ligand>
        <name>ATP</name>
        <dbReference type="ChEBI" id="CHEBI:30616"/>
    </ligand>
</feature>
<accession>B4T6C6</accession>
<reference key="1">
    <citation type="journal article" date="2011" name="J. Bacteriol.">
        <title>Comparative genomics of 28 Salmonella enterica isolates: evidence for CRISPR-mediated adaptive sublineage evolution.</title>
        <authorList>
            <person name="Fricke W.F."/>
            <person name="Mammel M.K."/>
            <person name="McDermott P.F."/>
            <person name="Tartera C."/>
            <person name="White D.G."/>
            <person name="Leclerc J.E."/>
            <person name="Ravel J."/>
            <person name="Cebula T.A."/>
        </authorList>
    </citation>
    <scope>NUCLEOTIDE SEQUENCE [LARGE SCALE GENOMIC DNA]</scope>
    <source>
        <strain>SL254</strain>
    </source>
</reference>
<evidence type="ECO:0000255" key="1">
    <source>
        <dbReference type="HAMAP-Rule" id="MF_00384"/>
    </source>
</evidence>